<accession>C4Z9C9</accession>
<comment type="catalytic activity">
    <reaction evidence="1">
        <text>L-citrulline + L-aspartate + ATP = 2-(N(omega)-L-arginino)succinate + AMP + diphosphate + H(+)</text>
        <dbReference type="Rhea" id="RHEA:10932"/>
        <dbReference type="ChEBI" id="CHEBI:15378"/>
        <dbReference type="ChEBI" id="CHEBI:29991"/>
        <dbReference type="ChEBI" id="CHEBI:30616"/>
        <dbReference type="ChEBI" id="CHEBI:33019"/>
        <dbReference type="ChEBI" id="CHEBI:57472"/>
        <dbReference type="ChEBI" id="CHEBI:57743"/>
        <dbReference type="ChEBI" id="CHEBI:456215"/>
        <dbReference type="EC" id="6.3.4.5"/>
    </reaction>
</comment>
<comment type="pathway">
    <text evidence="1">Amino-acid biosynthesis; L-arginine biosynthesis; L-arginine from L-ornithine and carbamoyl phosphate: step 2/3.</text>
</comment>
<comment type="subunit">
    <text evidence="1">Homotetramer.</text>
</comment>
<comment type="subcellular location">
    <subcellularLocation>
        <location evidence="1">Cytoplasm</location>
    </subcellularLocation>
</comment>
<comment type="similarity">
    <text evidence="1">Belongs to the argininosuccinate synthase family. Type 1 subfamily.</text>
</comment>
<sequence length="408" mass="45484">MKDKVVLAYSGGLDTTAIIPWLKETYDYDVICCCINCGQGEELDGLDERAKLSGASKLYIEDICDEFSEDYIVPCVQAGAVYEHKYLLGTAMARPGIAKKLVEIARKEGAVAICHGATGKGNDQIRFELGIKALAPDIKVIAPWRQDNWKMDSREAEIEYCKAHGIDLPFGTDSSYSRDRNLWHISHEGLELEDPSQEPNYDHLLVLSVTPEHAPDEGEYVTMTFEKGVPTSVNGKKMKVADIIRELNRLGGKHGIGIIDIVENRVVGMKSRGVYETPGGTILMEAHDQLEELCLDRATMEVKKEMGNKLAQVVYEGKWFTPLREAIQAFVESTQEYVTGEVKFKLYKGNIIKAGTTSPYSLYSESLASFTTGDLYDHHDADGFITLFGLPLKVRAMKLLELENKKNN</sequence>
<dbReference type="EC" id="6.3.4.5" evidence="1"/>
<dbReference type="EMBL" id="CP001107">
    <property type="protein sequence ID" value="ACR75351.1"/>
    <property type="molecule type" value="Genomic_DNA"/>
</dbReference>
<dbReference type="RefSeq" id="WP_012742449.1">
    <property type="nucleotide sequence ID" value="NZ_CAXSYD010000009.1"/>
</dbReference>
<dbReference type="SMR" id="C4Z9C9"/>
<dbReference type="STRING" id="515619.EUBREC_1607"/>
<dbReference type="PaxDb" id="515619-EUBREC_1607"/>
<dbReference type="KEGG" id="ere:EUBREC_1607"/>
<dbReference type="HOGENOM" id="CLU_032784_4_2_9"/>
<dbReference type="UniPathway" id="UPA00068">
    <property type="reaction ID" value="UER00113"/>
</dbReference>
<dbReference type="Proteomes" id="UP000001477">
    <property type="component" value="Chromosome"/>
</dbReference>
<dbReference type="GO" id="GO:0005737">
    <property type="term" value="C:cytoplasm"/>
    <property type="evidence" value="ECO:0007669"/>
    <property type="project" value="UniProtKB-SubCell"/>
</dbReference>
<dbReference type="GO" id="GO:0004055">
    <property type="term" value="F:argininosuccinate synthase activity"/>
    <property type="evidence" value="ECO:0007669"/>
    <property type="project" value="UniProtKB-UniRule"/>
</dbReference>
<dbReference type="GO" id="GO:0005524">
    <property type="term" value="F:ATP binding"/>
    <property type="evidence" value="ECO:0007669"/>
    <property type="project" value="UniProtKB-UniRule"/>
</dbReference>
<dbReference type="GO" id="GO:0000053">
    <property type="term" value="P:argininosuccinate metabolic process"/>
    <property type="evidence" value="ECO:0007669"/>
    <property type="project" value="TreeGrafter"/>
</dbReference>
<dbReference type="GO" id="GO:0006526">
    <property type="term" value="P:L-arginine biosynthetic process"/>
    <property type="evidence" value="ECO:0007669"/>
    <property type="project" value="UniProtKB-UniRule"/>
</dbReference>
<dbReference type="GO" id="GO:0000050">
    <property type="term" value="P:urea cycle"/>
    <property type="evidence" value="ECO:0007669"/>
    <property type="project" value="TreeGrafter"/>
</dbReference>
<dbReference type="CDD" id="cd01999">
    <property type="entry name" value="ASS"/>
    <property type="match status" value="1"/>
</dbReference>
<dbReference type="FunFam" id="3.40.50.620:FF:000019">
    <property type="entry name" value="Argininosuccinate synthase"/>
    <property type="match status" value="1"/>
</dbReference>
<dbReference type="FunFam" id="3.90.1260.10:FF:000007">
    <property type="entry name" value="Argininosuccinate synthase"/>
    <property type="match status" value="1"/>
</dbReference>
<dbReference type="Gene3D" id="3.90.1260.10">
    <property type="entry name" value="Argininosuccinate synthetase, chain A, domain 2"/>
    <property type="match status" value="1"/>
</dbReference>
<dbReference type="Gene3D" id="3.40.50.620">
    <property type="entry name" value="HUPs"/>
    <property type="match status" value="1"/>
</dbReference>
<dbReference type="Gene3D" id="1.20.5.470">
    <property type="entry name" value="Single helix bin"/>
    <property type="match status" value="1"/>
</dbReference>
<dbReference type="HAMAP" id="MF_00005">
    <property type="entry name" value="Arg_succ_synth_type1"/>
    <property type="match status" value="1"/>
</dbReference>
<dbReference type="InterPro" id="IPR048268">
    <property type="entry name" value="Arginosuc_syn_C"/>
</dbReference>
<dbReference type="InterPro" id="IPR048267">
    <property type="entry name" value="Arginosuc_syn_N"/>
</dbReference>
<dbReference type="InterPro" id="IPR001518">
    <property type="entry name" value="Arginosuc_synth"/>
</dbReference>
<dbReference type="InterPro" id="IPR018223">
    <property type="entry name" value="Arginosuc_synth_CS"/>
</dbReference>
<dbReference type="InterPro" id="IPR023434">
    <property type="entry name" value="Arginosuc_synth_type_1_subfam"/>
</dbReference>
<dbReference type="InterPro" id="IPR024074">
    <property type="entry name" value="AS_cat/multimer_dom_body"/>
</dbReference>
<dbReference type="InterPro" id="IPR014729">
    <property type="entry name" value="Rossmann-like_a/b/a_fold"/>
</dbReference>
<dbReference type="NCBIfam" id="TIGR00032">
    <property type="entry name" value="argG"/>
    <property type="match status" value="1"/>
</dbReference>
<dbReference type="NCBIfam" id="NF001770">
    <property type="entry name" value="PRK00509.1"/>
    <property type="match status" value="1"/>
</dbReference>
<dbReference type="PANTHER" id="PTHR11587">
    <property type="entry name" value="ARGININOSUCCINATE SYNTHASE"/>
    <property type="match status" value="1"/>
</dbReference>
<dbReference type="PANTHER" id="PTHR11587:SF2">
    <property type="entry name" value="ARGININOSUCCINATE SYNTHASE"/>
    <property type="match status" value="1"/>
</dbReference>
<dbReference type="Pfam" id="PF20979">
    <property type="entry name" value="Arginosuc_syn_C"/>
    <property type="match status" value="1"/>
</dbReference>
<dbReference type="Pfam" id="PF00764">
    <property type="entry name" value="Arginosuc_synth"/>
    <property type="match status" value="1"/>
</dbReference>
<dbReference type="SUPFAM" id="SSF52402">
    <property type="entry name" value="Adenine nucleotide alpha hydrolases-like"/>
    <property type="match status" value="1"/>
</dbReference>
<dbReference type="SUPFAM" id="SSF69864">
    <property type="entry name" value="Argininosuccinate synthetase, C-terminal domain"/>
    <property type="match status" value="1"/>
</dbReference>
<dbReference type="PROSITE" id="PS00564">
    <property type="entry name" value="ARGININOSUCCIN_SYN_1"/>
    <property type="match status" value="1"/>
</dbReference>
<dbReference type="PROSITE" id="PS00565">
    <property type="entry name" value="ARGININOSUCCIN_SYN_2"/>
    <property type="match status" value="1"/>
</dbReference>
<name>ASSY_AGARV</name>
<evidence type="ECO:0000255" key="1">
    <source>
        <dbReference type="HAMAP-Rule" id="MF_00005"/>
    </source>
</evidence>
<protein>
    <recommendedName>
        <fullName evidence="1">Argininosuccinate synthase</fullName>
        <ecNumber evidence="1">6.3.4.5</ecNumber>
    </recommendedName>
    <alternativeName>
        <fullName evidence="1">Citrulline--aspartate ligase</fullName>
    </alternativeName>
</protein>
<organism>
    <name type="scientific">Agathobacter rectalis (strain ATCC 33656 / DSM 3377 / JCM 17463 / KCTC 5835 / VPI 0990)</name>
    <name type="common">Eubacterium rectale</name>
    <dbReference type="NCBI Taxonomy" id="515619"/>
    <lineage>
        <taxon>Bacteria</taxon>
        <taxon>Bacillati</taxon>
        <taxon>Bacillota</taxon>
        <taxon>Clostridia</taxon>
        <taxon>Lachnospirales</taxon>
        <taxon>Lachnospiraceae</taxon>
        <taxon>Agathobacter</taxon>
    </lineage>
</organism>
<feature type="chain" id="PRO_1000201682" description="Argininosuccinate synthase">
    <location>
        <begin position="1"/>
        <end position="408"/>
    </location>
</feature>
<feature type="binding site" evidence="1">
    <location>
        <begin position="8"/>
        <end position="16"/>
    </location>
    <ligand>
        <name>ATP</name>
        <dbReference type="ChEBI" id="CHEBI:30616"/>
    </ligand>
</feature>
<feature type="binding site" evidence="1">
    <location>
        <position position="86"/>
    </location>
    <ligand>
        <name>L-citrulline</name>
        <dbReference type="ChEBI" id="CHEBI:57743"/>
    </ligand>
</feature>
<feature type="binding site" evidence="1">
    <location>
        <position position="116"/>
    </location>
    <ligand>
        <name>ATP</name>
        <dbReference type="ChEBI" id="CHEBI:30616"/>
    </ligand>
</feature>
<feature type="binding site" evidence="1">
    <location>
        <position position="118"/>
    </location>
    <ligand>
        <name>L-aspartate</name>
        <dbReference type="ChEBI" id="CHEBI:29991"/>
    </ligand>
</feature>
<feature type="binding site" evidence="1">
    <location>
        <position position="122"/>
    </location>
    <ligand>
        <name>L-aspartate</name>
        <dbReference type="ChEBI" id="CHEBI:29991"/>
    </ligand>
</feature>
<feature type="binding site" evidence="1">
    <location>
        <position position="122"/>
    </location>
    <ligand>
        <name>L-citrulline</name>
        <dbReference type="ChEBI" id="CHEBI:57743"/>
    </ligand>
</feature>
<feature type="binding site" evidence="1">
    <location>
        <position position="123"/>
    </location>
    <ligand>
        <name>L-aspartate</name>
        <dbReference type="ChEBI" id="CHEBI:29991"/>
    </ligand>
</feature>
<feature type="binding site" evidence="1">
    <location>
        <position position="126"/>
    </location>
    <ligand>
        <name>L-citrulline</name>
        <dbReference type="ChEBI" id="CHEBI:57743"/>
    </ligand>
</feature>
<feature type="binding site" evidence="1">
    <location>
        <position position="177"/>
    </location>
    <ligand>
        <name>L-citrulline</name>
        <dbReference type="ChEBI" id="CHEBI:57743"/>
    </ligand>
</feature>
<feature type="binding site" evidence="1">
    <location>
        <position position="186"/>
    </location>
    <ligand>
        <name>L-citrulline</name>
        <dbReference type="ChEBI" id="CHEBI:57743"/>
    </ligand>
</feature>
<feature type="binding site" evidence="1">
    <location>
        <position position="263"/>
    </location>
    <ligand>
        <name>L-citrulline</name>
        <dbReference type="ChEBI" id="CHEBI:57743"/>
    </ligand>
</feature>
<feature type="binding site" evidence="1">
    <location>
        <position position="275"/>
    </location>
    <ligand>
        <name>L-citrulline</name>
        <dbReference type="ChEBI" id="CHEBI:57743"/>
    </ligand>
</feature>
<reference key="1">
    <citation type="journal article" date="2009" name="Proc. Natl. Acad. Sci. U.S.A.">
        <title>Characterizing a model human gut microbiota composed of members of its two dominant bacterial phyla.</title>
        <authorList>
            <person name="Mahowald M.A."/>
            <person name="Rey F.E."/>
            <person name="Seedorf H."/>
            <person name="Turnbaugh P.J."/>
            <person name="Fulton R.S."/>
            <person name="Wollam A."/>
            <person name="Shah N."/>
            <person name="Wang C."/>
            <person name="Magrini V."/>
            <person name="Wilson R.K."/>
            <person name="Cantarel B.L."/>
            <person name="Coutinho P.M."/>
            <person name="Henrissat B."/>
            <person name="Crock L.W."/>
            <person name="Russell A."/>
            <person name="Verberkmoes N.C."/>
            <person name="Hettich R.L."/>
            <person name="Gordon J.I."/>
        </authorList>
    </citation>
    <scope>NUCLEOTIDE SEQUENCE [LARGE SCALE GENOMIC DNA]</scope>
    <source>
        <strain>ATCC 33656 / DSM 3377 / JCM 17463 / KCTC 5835 / LMG 30912 / VPI 0990</strain>
    </source>
</reference>
<keyword id="KW-0028">Amino-acid biosynthesis</keyword>
<keyword id="KW-0055">Arginine biosynthesis</keyword>
<keyword id="KW-0067">ATP-binding</keyword>
<keyword id="KW-0963">Cytoplasm</keyword>
<keyword id="KW-0436">Ligase</keyword>
<keyword id="KW-0547">Nucleotide-binding</keyword>
<proteinExistence type="inferred from homology"/>
<gene>
    <name evidence="1" type="primary">argG</name>
    <name type="ordered locus">EUBREC_1607</name>
</gene>